<comment type="function">
    <text evidence="1">Produces ATP from ADP in the presence of a proton gradient across the membrane. The gamma chain is believed to be important in regulating ATPase activity and the flow of protons through the CF(0) complex.</text>
</comment>
<comment type="subunit">
    <text evidence="1">F-type ATPases have 2 components, CF(1) - the catalytic core - and CF(0) - the membrane proton channel. CF(1) has five subunits: alpha(3), beta(3), gamma(1), delta(1), epsilon(1). CF(0) has three main subunits: a, b and c.</text>
</comment>
<comment type="subcellular location">
    <subcellularLocation>
        <location evidence="1">Cell inner membrane</location>
        <topology evidence="1">Peripheral membrane protein</topology>
    </subcellularLocation>
</comment>
<comment type="similarity">
    <text evidence="1">Belongs to the ATPase gamma chain family.</text>
</comment>
<proteinExistence type="inferred from homology"/>
<dbReference type="EMBL" id="CP000970">
    <property type="protein sequence ID" value="ACB20125.1"/>
    <property type="molecule type" value="Genomic_DNA"/>
</dbReference>
<dbReference type="RefSeq" id="WP_000896498.1">
    <property type="nucleotide sequence ID" value="NC_010498.1"/>
</dbReference>
<dbReference type="SMR" id="B1LL60"/>
<dbReference type="GeneID" id="93778234"/>
<dbReference type="KEGG" id="ecm:EcSMS35_4101"/>
<dbReference type="HOGENOM" id="CLU_050669_0_1_6"/>
<dbReference type="Proteomes" id="UP000007011">
    <property type="component" value="Chromosome"/>
</dbReference>
<dbReference type="GO" id="GO:0005886">
    <property type="term" value="C:plasma membrane"/>
    <property type="evidence" value="ECO:0007669"/>
    <property type="project" value="UniProtKB-SubCell"/>
</dbReference>
<dbReference type="GO" id="GO:0045259">
    <property type="term" value="C:proton-transporting ATP synthase complex"/>
    <property type="evidence" value="ECO:0007669"/>
    <property type="project" value="UniProtKB-KW"/>
</dbReference>
<dbReference type="GO" id="GO:0005524">
    <property type="term" value="F:ATP binding"/>
    <property type="evidence" value="ECO:0007669"/>
    <property type="project" value="UniProtKB-UniRule"/>
</dbReference>
<dbReference type="GO" id="GO:0046933">
    <property type="term" value="F:proton-transporting ATP synthase activity, rotational mechanism"/>
    <property type="evidence" value="ECO:0007669"/>
    <property type="project" value="UniProtKB-UniRule"/>
</dbReference>
<dbReference type="GO" id="GO:0042777">
    <property type="term" value="P:proton motive force-driven plasma membrane ATP synthesis"/>
    <property type="evidence" value="ECO:0007669"/>
    <property type="project" value="UniProtKB-UniRule"/>
</dbReference>
<dbReference type="CDD" id="cd12151">
    <property type="entry name" value="F1-ATPase_gamma"/>
    <property type="match status" value="1"/>
</dbReference>
<dbReference type="FunFam" id="1.10.287.80:FF:000005">
    <property type="entry name" value="ATP synthase gamma chain"/>
    <property type="match status" value="2"/>
</dbReference>
<dbReference type="FunFam" id="3.40.1380.10:FF:000001">
    <property type="entry name" value="ATP synthase gamma chain"/>
    <property type="match status" value="1"/>
</dbReference>
<dbReference type="Gene3D" id="3.40.1380.10">
    <property type="match status" value="1"/>
</dbReference>
<dbReference type="Gene3D" id="1.10.287.80">
    <property type="entry name" value="ATP synthase, gamma subunit, helix hairpin domain"/>
    <property type="match status" value="1"/>
</dbReference>
<dbReference type="HAMAP" id="MF_00815">
    <property type="entry name" value="ATP_synth_gamma_bact"/>
    <property type="match status" value="1"/>
</dbReference>
<dbReference type="InterPro" id="IPR035968">
    <property type="entry name" value="ATP_synth_F1_ATPase_gsu"/>
</dbReference>
<dbReference type="InterPro" id="IPR000131">
    <property type="entry name" value="ATP_synth_F1_gsu"/>
</dbReference>
<dbReference type="InterPro" id="IPR023632">
    <property type="entry name" value="ATP_synth_F1_gsu_CS"/>
</dbReference>
<dbReference type="NCBIfam" id="TIGR01146">
    <property type="entry name" value="ATPsyn_F1gamma"/>
    <property type="match status" value="1"/>
</dbReference>
<dbReference type="NCBIfam" id="NF004144">
    <property type="entry name" value="PRK05621.1-1"/>
    <property type="match status" value="1"/>
</dbReference>
<dbReference type="PANTHER" id="PTHR11693">
    <property type="entry name" value="ATP SYNTHASE GAMMA CHAIN"/>
    <property type="match status" value="1"/>
</dbReference>
<dbReference type="PANTHER" id="PTHR11693:SF22">
    <property type="entry name" value="ATP SYNTHASE SUBUNIT GAMMA, MITOCHONDRIAL"/>
    <property type="match status" value="1"/>
</dbReference>
<dbReference type="Pfam" id="PF00231">
    <property type="entry name" value="ATP-synt"/>
    <property type="match status" value="1"/>
</dbReference>
<dbReference type="PRINTS" id="PR00126">
    <property type="entry name" value="ATPASEGAMMA"/>
</dbReference>
<dbReference type="SUPFAM" id="SSF52943">
    <property type="entry name" value="ATP synthase (F1-ATPase), gamma subunit"/>
    <property type="match status" value="1"/>
</dbReference>
<dbReference type="PROSITE" id="PS00153">
    <property type="entry name" value="ATPASE_GAMMA"/>
    <property type="match status" value="1"/>
</dbReference>
<sequence length="287" mass="31577">MAGAKEIRSKIASVQNTQKITKAMEMVAASKMRKSQDRMAASRPYAETMRKVIGHLAHGNLEYKHPYLEDRDVKRVGYLVVSTDRGLCGGLNINLFKKLLAEMKTWTDKGVQCDLAMIGSKGVSFFNSVGGNVVAQVTGMGDNPSLSELIGPVKVMLQAYDEGRLDKLYIVSNKFINTMSQVPTISQLLPLPASDDDDLKHKSWDYLYEPDPKALLDTLLRRYVESQVYQGVVENLASEQAARMVAMKAATDNGGSLIKELQLVYNKARQASITQELTEIVSGAAAV</sequence>
<keyword id="KW-0066">ATP synthesis</keyword>
<keyword id="KW-0997">Cell inner membrane</keyword>
<keyword id="KW-1003">Cell membrane</keyword>
<keyword id="KW-0139">CF(1)</keyword>
<keyword id="KW-0375">Hydrogen ion transport</keyword>
<keyword id="KW-0406">Ion transport</keyword>
<keyword id="KW-0472">Membrane</keyword>
<keyword id="KW-0813">Transport</keyword>
<accession>B1LL60</accession>
<organism>
    <name type="scientific">Escherichia coli (strain SMS-3-5 / SECEC)</name>
    <dbReference type="NCBI Taxonomy" id="439855"/>
    <lineage>
        <taxon>Bacteria</taxon>
        <taxon>Pseudomonadati</taxon>
        <taxon>Pseudomonadota</taxon>
        <taxon>Gammaproteobacteria</taxon>
        <taxon>Enterobacterales</taxon>
        <taxon>Enterobacteriaceae</taxon>
        <taxon>Escherichia</taxon>
    </lineage>
</organism>
<name>ATPG_ECOSM</name>
<reference key="1">
    <citation type="journal article" date="2008" name="J. Bacteriol.">
        <title>Insights into the environmental resistance gene pool from the genome sequence of the multidrug-resistant environmental isolate Escherichia coli SMS-3-5.</title>
        <authorList>
            <person name="Fricke W.F."/>
            <person name="Wright M.S."/>
            <person name="Lindell A.H."/>
            <person name="Harkins D.M."/>
            <person name="Baker-Austin C."/>
            <person name="Ravel J."/>
            <person name="Stepanauskas R."/>
        </authorList>
    </citation>
    <scope>NUCLEOTIDE SEQUENCE [LARGE SCALE GENOMIC DNA]</scope>
    <source>
        <strain>SMS-3-5 / SECEC</strain>
    </source>
</reference>
<protein>
    <recommendedName>
        <fullName evidence="1">ATP synthase gamma chain</fullName>
    </recommendedName>
    <alternativeName>
        <fullName evidence="1">ATP synthase F1 sector gamma subunit</fullName>
    </alternativeName>
    <alternativeName>
        <fullName evidence="1">F-ATPase gamma subunit</fullName>
    </alternativeName>
</protein>
<evidence type="ECO:0000255" key="1">
    <source>
        <dbReference type="HAMAP-Rule" id="MF_00815"/>
    </source>
</evidence>
<gene>
    <name evidence="1" type="primary">atpG</name>
    <name type="ordered locus">EcSMS35_4101</name>
</gene>
<feature type="chain" id="PRO_1000134149" description="ATP synthase gamma chain">
    <location>
        <begin position="1"/>
        <end position="287"/>
    </location>
</feature>